<keyword id="KW-0963">Cytoplasm</keyword>
<keyword id="KW-0456">Lyase</keyword>
<keyword id="KW-0704">Schiff base</keyword>
<feature type="chain" id="PRO_1000189838" description="Deoxyribose-phosphate aldolase">
    <location>
        <begin position="1"/>
        <end position="220"/>
    </location>
</feature>
<feature type="active site" description="Proton donor/acceptor" evidence="1">
    <location>
        <position position="89"/>
    </location>
</feature>
<feature type="active site" description="Schiff-base intermediate with acetaldehyde" evidence="1">
    <location>
        <position position="151"/>
    </location>
</feature>
<feature type="active site" description="Proton donor/acceptor" evidence="1">
    <location>
        <position position="180"/>
    </location>
</feature>
<gene>
    <name evidence="1" type="primary">deoC</name>
    <name type="ordered locus">SPT_1360</name>
</gene>
<protein>
    <recommendedName>
        <fullName evidence="1">Deoxyribose-phosphate aldolase</fullName>
        <shortName evidence="1">DERA</shortName>
        <ecNumber evidence="1">4.1.2.4</ecNumber>
    </recommendedName>
    <alternativeName>
        <fullName evidence="1">2-deoxy-D-ribose 5-phosphate aldolase</fullName>
    </alternativeName>
    <alternativeName>
        <fullName evidence="1">Phosphodeoxyriboaldolase</fullName>
        <shortName evidence="1">Deoxyriboaldolase</shortName>
    </alternativeName>
</protein>
<proteinExistence type="inferred from homology"/>
<sequence length="220" mass="23073">MKLNKYIDHTLLKQDAKKKQIDSLLSEAREYDFASVCVNPTWVEHAKKGLEGTDVKVCTVVGFPLGATTSAVKAFETKEAIQNGADEIDMVINVGALKSGNLALVESDIRAVVEASGDKLVKVIIEACLLTDQEKIVVCQLAQKAGADFVKTSTGFSTGGATIADVRLMRETVGSDMGVKAAGGARSYADALAFVEAGATRIGTSAGVAILKGELADGDY</sequence>
<comment type="function">
    <text evidence="1">Catalyzes a reversible aldol reaction between acetaldehyde and D-glyceraldehyde 3-phosphate to generate 2-deoxy-D-ribose 5-phosphate.</text>
</comment>
<comment type="catalytic activity">
    <reaction evidence="1">
        <text>2-deoxy-D-ribose 5-phosphate = D-glyceraldehyde 3-phosphate + acetaldehyde</text>
        <dbReference type="Rhea" id="RHEA:12821"/>
        <dbReference type="ChEBI" id="CHEBI:15343"/>
        <dbReference type="ChEBI" id="CHEBI:59776"/>
        <dbReference type="ChEBI" id="CHEBI:62877"/>
        <dbReference type="EC" id="4.1.2.4"/>
    </reaction>
</comment>
<comment type="pathway">
    <text evidence="1">Carbohydrate degradation; 2-deoxy-D-ribose 1-phosphate degradation; D-glyceraldehyde 3-phosphate and acetaldehyde from 2-deoxy-alpha-D-ribose 1-phosphate: step 2/2.</text>
</comment>
<comment type="subcellular location">
    <subcellularLocation>
        <location evidence="1">Cytoplasm</location>
    </subcellularLocation>
</comment>
<comment type="similarity">
    <text evidence="1">Belongs to the DeoC/FbaB aldolase family. DeoC type 1 subfamily.</text>
</comment>
<name>DEOC_STRZT</name>
<dbReference type="EC" id="4.1.2.4" evidence="1"/>
<dbReference type="EMBL" id="CP000921">
    <property type="protein sequence ID" value="ACO23889.1"/>
    <property type="molecule type" value="Genomic_DNA"/>
</dbReference>
<dbReference type="RefSeq" id="WP_000773671.1">
    <property type="nucleotide sequence ID" value="NC_012469.1"/>
</dbReference>
<dbReference type="SMR" id="C1CS48"/>
<dbReference type="KEGG" id="snt:SPT_1360"/>
<dbReference type="HOGENOM" id="CLU_053595_0_0_9"/>
<dbReference type="UniPathway" id="UPA00002">
    <property type="reaction ID" value="UER00468"/>
</dbReference>
<dbReference type="GO" id="GO:0005737">
    <property type="term" value="C:cytoplasm"/>
    <property type="evidence" value="ECO:0007669"/>
    <property type="project" value="UniProtKB-SubCell"/>
</dbReference>
<dbReference type="GO" id="GO:0004139">
    <property type="term" value="F:deoxyribose-phosphate aldolase activity"/>
    <property type="evidence" value="ECO:0007669"/>
    <property type="project" value="UniProtKB-UniRule"/>
</dbReference>
<dbReference type="GO" id="GO:0006018">
    <property type="term" value="P:2-deoxyribose 1-phosphate catabolic process"/>
    <property type="evidence" value="ECO:0007669"/>
    <property type="project" value="UniProtKB-UniRule"/>
</dbReference>
<dbReference type="GO" id="GO:0016052">
    <property type="term" value="P:carbohydrate catabolic process"/>
    <property type="evidence" value="ECO:0007669"/>
    <property type="project" value="TreeGrafter"/>
</dbReference>
<dbReference type="GO" id="GO:0009264">
    <property type="term" value="P:deoxyribonucleotide catabolic process"/>
    <property type="evidence" value="ECO:0007669"/>
    <property type="project" value="InterPro"/>
</dbReference>
<dbReference type="CDD" id="cd00959">
    <property type="entry name" value="DeoC"/>
    <property type="match status" value="1"/>
</dbReference>
<dbReference type="FunFam" id="3.20.20.70:FF:000044">
    <property type="entry name" value="Deoxyribose-phosphate aldolase"/>
    <property type="match status" value="1"/>
</dbReference>
<dbReference type="Gene3D" id="3.20.20.70">
    <property type="entry name" value="Aldolase class I"/>
    <property type="match status" value="1"/>
</dbReference>
<dbReference type="HAMAP" id="MF_00114">
    <property type="entry name" value="DeoC_type1"/>
    <property type="match status" value="1"/>
</dbReference>
<dbReference type="InterPro" id="IPR013785">
    <property type="entry name" value="Aldolase_TIM"/>
</dbReference>
<dbReference type="InterPro" id="IPR011343">
    <property type="entry name" value="DeoC"/>
</dbReference>
<dbReference type="InterPro" id="IPR002915">
    <property type="entry name" value="DeoC/FbaB/LacD_aldolase"/>
</dbReference>
<dbReference type="InterPro" id="IPR028581">
    <property type="entry name" value="DeoC_typeI"/>
</dbReference>
<dbReference type="NCBIfam" id="TIGR00126">
    <property type="entry name" value="deoC"/>
    <property type="match status" value="1"/>
</dbReference>
<dbReference type="PANTHER" id="PTHR10889">
    <property type="entry name" value="DEOXYRIBOSE-PHOSPHATE ALDOLASE"/>
    <property type="match status" value="1"/>
</dbReference>
<dbReference type="PANTHER" id="PTHR10889:SF1">
    <property type="entry name" value="DEOXYRIBOSE-PHOSPHATE ALDOLASE"/>
    <property type="match status" value="1"/>
</dbReference>
<dbReference type="Pfam" id="PF01791">
    <property type="entry name" value="DeoC"/>
    <property type="match status" value="1"/>
</dbReference>
<dbReference type="PIRSF" id="PIRSF001357">
    <property type="entry name" value="DeoC"/>
    <property type="match status" value="1"/>
</dbReference>
<dbReference type="SMART" id="SM01133">
    <property type="entry name" value="DeoC"/>
    <property type="match status" value="1"/>
</dbReference>
<dbReference type="SUPFAM" id="SSF51569">
    <property type="entry name" value="Aldolase"/>
    <property type="match status" value="1"/>
</dbReference>
<evidence type="ECO:0000255" key="1">
    <source>
        <dbReference type="HAMAP-Rule" id="MF_00114"/>
    </source>
</evidence>
<organism>
    <name type="scientific">Streptococcus pneumoniae (strain Taiwan19F-14)</name>
    <dbReference type="NCBI Taxonomy" id="487213"/>
    <lineage>
        <taxon>Bacteria</taxon>
        <taxon>Bacillati</taxon>
        <taxon>Bacillota</taxon>
        <taxon>Bacilli</taxon>
        <taxon>Lactobacillales</taxon>
        <taxon>Streptococcaceae</taxon>
        <taxon>Streptococcus</taxon>
    </lineage>
</organism>
<accession>C1CS48</accession>
<reference key="1">
    <citation type="journal article" date="2010" name="Genome Biol.">
        <title>Structure and dynamics of the pan-genome of Streptococcus pneumoniae and closely related species.</title>
        <authorList>
            <person name="Donati C."/>
            <person name="Hiller N.L."/>
            <person name="Tettelin H."/>
            <person name="Muzzi A."/>
            <person name="Croucher N.J."/>
            <person name="Angiuoli S.V."/>
            <person name="Oggioni M."/>
            <person name="Dunning Hotopp J.C."/>
            <person name="Hu F.Z."/>
            <person name="Riley D.R."/>
            <person name="Covacci A."/>
            <person name="Mitchell T.J."/>
            <person name="Bentley S.D."/>
            <person name="Kilian M."/>
            <person name="Ehrlich G.D."/>
            <person name="Rappuoli R."/>
            <person name="Moxon E.R."/>
            <person name="Masignani V."/>
        </authorList>
    </citation>
    <scope>NUCLEOTIDE SEQUENCE [LARGE SCALE GENOMIC DNA]</scope>
    <source>
        <strain>Taiwan19F-14</strain>
    </source>
</reference>